<protein>
    <recommendedName>
        <fullName evidence="23">Bcl-2-like protein 10</fullName>
        <shortName evidence="17">Bcl2-L-10</shortName>
    </recommendedName>
    <alternativeName>
        <fullName evidence="1">Anti-apoptotic protein Boo</fullName>
    </alternativeName>
    <alternativeName>
        <fullName evidence="16">Anti-apoptotic protein NrH</fullName>
    </alternativeName>
    <alternativeName>
        <fullName evidence="15">Apoptosis regulator Bcl-B</fullName>
    </alternativeName>
</protein>
<evidence type="ECO:0000250" key="1">
    <source>
        <dbReference type="UniProtKB" id="Q9Z0F3"/>
    </source>
</evidence>
<evidence type="ECO:0000255" key="2"/>
<evidence type="ECO:0000269" key="3">
    <source>
    </source>
</evidence>
<evidence type="ECO:0000269" key="4">
    <source>
    </source>
</evidence>
<evidence type="ECO:0000269" key="5">
    <source>
    </source>
</evidence>
<evidence type="ECO:0000269" key="6">
    <source>
    </source>
</evidence>
<evidence type="ECO:0000269" key="7">
    <source>
    </source>
</evidence>
<evidence type="ECO:0000269" key="8">
    <source>
    </source>
</evidence>
<evidence type="ECO:0000269" key="9">
    <source>
    </source>
</evidence>
<evidence type="ECO:0000269" key="10">
    <source>
    </source>
</evidence>
<evidence type="ECO:0000269" key="11">
    <source>
    </source>
</evidence>
<evidence type="ECO:0000269" key="12">
    <source>
    </source>
</evidence>
<evidence type="ECO:0000269" key="13">
    <source>
    </source>
</evidence>
<evidence type="ECO:0000269" key="14">
    <source>
    </source>
</evidence>
<evidence type="ECO:0000303" key="15">
    <source>
    </source>
</evidence>
<evidence type="ECO:0000303" key="16">
    <source>
    </source>
</evidence>
<evidence type="ECO:0000303" key="17">
    <source>
    </source>
</evidence>
<evidence type="ECO:0000303" key="18">
    <source>
    </source>
</evidence>
<evidence type="ECO:0000303" key="19">
    <source>
    </source>
</evidence>
<evidence type="ECO:0000303" key="20">
    <source>
    </source>
</evidence>
<evidence type="ECO:0000305" key="21"/>
<evidence type="ECO:0000305" key="22">
    <source>
    </source>
</evidence>
<evidence type="ECO:0000312" key="23">
    <source>
        <dbReference type="HGNC" id="HGNC:993"/>
    </source>
</evidence>
<evidence type="ECO:0007744" key="24">
    <source>
        <dbReference type="PDB" id="4B4S"/>
    </source>
</evidence>
<evidence type="ECO:0007829" key="25">
    <source>
        <dbReference type="PDB" id="4B4S"/>
    </source>
</evidence>
<feature type="chain" id="PRO_0000143068" description="Bcl-2-like protein 10">
    <location>
        <begin position="1"/>
        <end position="204"/>
    </location>
</feature>
<feature type="transmembrane region" description="Helical" evidence="2">
    <location>
        <begin position="183"/>
        <end position="200"/>
    </location>
</feature>
<feature type="region of interest" description="Required for Ca(2+) binding" evidence="8">
    <location>
        <begin position="118"/>
        <end position="133"/>
    </location>
</feature>
<feature type="short sequence motif" description="BH1">
    <location>
        <begin position="86"/>
        <end position="105"/>
    </location>
</feature>
<feature type="short sequence motif" description="BH2">
    <location>
        <begin position="156"/>
        <end position="167"/>
    </location>
</feature>
<feature type="cross-link" description="Glycyl lysine isopeptide (Lys-Gly) (interchain with G-Cter in ubiquitin)" evidence="12">
    <location>
        <position position="119"/>
    </location>
</feature>
<feature type="cross-link" description="Glycyl lysine isopeptide (Lys-Gly) (interchain with G-Cter in ubiquitin)" evidence="12">
    <location>
        <position position="120"/>
    </location>
</feature>
<feature type="cross-link" description="Glycyl lysine isopeptide (Lys-Gly) (interchain with G-Cter in ubiquitin)" evidence="12">
    <location>
        <position position="128"/>
    </location>
</feature>
<feature type="sequence variant" id="VAR_047113" description="In dbSNP:rs2231292.">
    <original>L</original>
    <variation>R</variation>
    <location>
        <position position="21"/>
    </location>
</feature>
<feature type="mutagenesis site" description="Reduces interaction with BECN1 and BCL2L11." evidence="10">
    <original>G</original>
    <variation>A</variation>
    <location>
        <position position="95"/>
    </location>
</feature>
<feature type="mutagenesis site" description="Abolishes Ca(2+) binding." evidence="8">
    <location>
        <begin position="118"/>
        <end position="133"/>
    </location>
</feature>
<feature type="mutagenesis site" description="Abolishes ubiquitination. No effect on localization to the mitochondria. No effect on interaction with BCL2L11, BIK, BBC3 or PMAIP1." evidence="12">
    <original>K</original>
    <variation>R</variation>
    <location>
        <position position="119"/>
    </location>
</feature>
<feature type="mutagenesis site" description="Abolishes ubiquitination. No effect on localization to the mitochondria. No effect on interaction with BCL2L11, BIK, BBC3 or PMAIP1." evidence="12">
    <original>K</original>
    <variation>R</variation>
    <location>
        <position position="120"/>
    </location>
</feature>
<feature type="mutagenesis site" description="Abolishes ubiquitination. No effect on localization to the mitochondria. No effect on interaction with BCL2L11, BIK, BBC3 or PMAIP1." evidence="12">
    <original>K</original>
    <variation>R</variation>
    <location>
        <position position="128"/>
    </location>
</feature>
<feature type="mutagenesis site" description="Abolishes Ca(2+) binding; when associated with N-133." evidence="8">
    <original>E</original>
    <variation>R</variation>
    <location>
        <position position="131"/>
    </location>
</feature>
<feature type="mutagenesis site" description="Abolishes Ca(2+) binding; when associated with R-131." evidence="8">
    <original>D</original>
    <variation>N</variation>
    <location>
        <position position="133"/>
    </location>
</feature>
<feature type="mutagenesis site" description="Abolishes interaction with NME2." evidence="6">
    <location>
        <begin position="178"/>
        <end position="191"/>
    </location>
</feature>
<feature type="sequence conflict" description="In Ref. 4; AAI04444." evidence="21" ref="4">
    <original>A</original>
    <variation>V</variation>
    <location>
        <position position="52"/>
    </location>
</feature>
<feature type="sequence conflict" description="In Ref. 4; AAI04444." evidence="21" ref="4">
    <original>R</original>
    <variation>W</variation>
    <location>
        <position position="55"/>
    </location>
</feature>
<feature type="helix" evidence="25">
    <location>
        <begin position="14"/>
        <end position="30"/>
    </location>
</feature>
<feature type="helix" evidence="25">
    <location>
        <begin position="44"/>
        <end position="59"/>
    </location>
</feature>
<feature type="helix" evidence="25">
    <location>
        <begin position="61"/>
        <end position="65"/>
    </location>
</feature>
<feature type="turn" evidence="25">
    <location>
        <begin position="66"/>
        <end position="69"/>
    </location>
</feature>
<feature type="helix" evidence="25">
    <location>
        <begin position="74"/>
        <end position="87"/>
    </location>
</feature>
<feature type="helix" evidence="25">
    <location>
        <begin position="94"/>
        <end position="108"/>
    </location>
</feature>
<feature type="helix" evidence="25">
    <location>
        <begin position="112"/>
        <end position="115"/>
    </location>
</feature>
<feature type="helix" evidence="25">
    <location>
        <begin position="133"/>
        <end position="151"/>
    </location>
</feature>
<feature type="helix" evidence="25">
    <location>
        <begin position="154"/>
        <end position="159"/>
    </location>
</feature>
<feature type="helix" evidence="25">
    <location>
        <begin position="162"/>
        <end position="170"/>
    </location>
</feature>
<comment type="function">
    <text evidence="1 3 5 13">Promotes cell survival by suppressing apoptosis induced by BAX but not BAK (PubMed:11278245, PubMed:11689480). Increases binding of AHCYL1/IRBIT to ITPR1 (PubMed:27995898). Reduces ITPR1-mediated calcium release from the endoplasmic reticulum cooperatively with AHCYL1/IRBIT under normal cellular conditions (PubMed:27995898). Under apoptotic stress conditions, dissociates from ITPR1 and is displaced from mitochondria-associated endoplasmic reticulum membranes, leading to increased Ca(2+) transfer to mitochondria which promotes apoptosis (PubMed:27995898). Required for the correct formation of the microtubule organizing center during oocyte cell division, potentially via regulation of protein abundance and localization of other microtubule organizing center components such as AURKA and TPX2 (By similarity).</text>
</comment>
<comment type="cofactor">
    <cofactor evidence="8">
        <name>Ca(2+)</name>
        <dbReference type="ChEBI" id="CHEBI:29108"/>
    </cofactor>
</comment>
<comment type="subunit">
    <text evidence="1 3 4 6 7 9 10 11 12 13 14">Interacts with BAX (PubMed:11278245, PubMed:23235460). Interacts with BCL2 and BCL2L1/BCLX (PubMed:11278245, PubMed:11593390). Interacts with APAF1 (By similarity). Interacts with ITPR1, ITPR2 and ITPR3; the interaction with ITPR1 is increased in the presence of AHCLY1 (PubMed:27995898). Interacts with AHCYL1 (PubMed:27995898). Interacts with HIP1R (via ENTH and I/LWEQ domains) (PubMed:19255499). Interacts with CASP9 (PubMed:19255499). Interacts with BCL2L11/BIM (PubMed:22498477, PubMed:23235460, PubMed:23563182). Interacts with BIK (PubMed:23235460, PubMed:23563182). Interacts with UBQLN4 (PubMed:34245648). Interacts with NME2/NM23-H2 (PubMed:17532299). Interacts with PMAIP1/NOXA (PubMed:23563182). Interacts with TPX2 (By similarity). Interacts with UBQLN1; in the cytoplasm (PubMed:22233804). Interacts (via BH1 domain) with BECN1 (PubMed:22498477).</text>
</comment>
<comment type="interaction">
    <interactant intactId="EBI-2126349">
        <id>Q9HD36</id>
    </interactant>
    <interactant intactId="EBI-2371423">
        <id>O43865</id>
        <label>AHCYL1</label>
    </interactant>
    <organismsDiffer>false</organismsDiffer>
    <experiments>4</experiments>
</comment>
<comment type="interaction">
    <interactant intactId="EBI-2126349">
        <id>Q9HD36</id>
    </interactant>
    <interactant intactId="EBI-516580">
        <id>Q07812</id>
        <label>BAX</label>
    </interactant>
    <organismsDiffer>false</organismsDiffer>
    <experiments>3</experiments>
</comment>
<comment type="interaction">
    <interactant intactId="EBI-2126349">
        <id>Q9HD36</id>
    </interactant>
    <interactant intactId="EBI-526406">
        <id>O43521</id>
        <label>BCL2L11</label>
    </interactant>
    <organismsDiffer>false</organismsDiffer>
    <experiments>11</experiments>
</comment>
<comment type="interaction">
    <interactant intactId="EBI-2126349">
        <id>Q9HD36</id>
    </interactant>
    <interactant intactId="EBI-526416">
        <id>O43521-1</id>
        <label>BCL2L11</label>
    </interactant>
    <organismsDiffer>false</organismsDiffer>
    <experiments>2</experiments>
</comment>
<comment type="interaction">
    <interactant intactId="EBI-2126349">
        <id>Q9HD36</id>
    </interactant>
    <interactant intactId="EBI-700794">
        <id>Q13323</id>
        <label>BIK</label>
    </interactant>
    <organismsDiffer>false</organismsDiffer>
    <experiments>8</experiments>
</comment>
<comment type="interaction">
    <interactant intactId="EBI-2126349">
        <id>Q9HD36</id>
    </interactant>
    <interactant intactId="EBI-3919268">
        <id>Q96LC9</id>
        <label>BMF</label>
    </interactant>
    <organismsDiffer>false</organismsDiffer>
    <experiments>3</experiments>
</comment>
<comment type="interaction">
    <interactant intactId="EBI-2126349">
        <id>Q9HD36</id>
    </interactant>
    <interactant intactId="EBI-465548">
        <id>Q14643</id>
        <label>ITPR1</label>
    </interactant>
    <organismsDiffer>false</organismsDiffer>
    <experiments>7</experiments>
</comment>
<comment type="interaction">
    <interactant intactId="EBI-2126349">
        <id>Q9HD36</id>
    </interactant>
    <interactant intactId="EBI-11324706">
        <id>Q99735</id>
        <label>MGST2</label>
    </interactant>
    <organismsDiffer>false</organismsDiffer>
    <experiments>3</experiments>
</comment>
<comment type="interaction">
    <interactant intactId="EBI-2126349">
        <id>Q9HD36</id>
    </interactant>
    <interactant intactId="EBI-1047489">
        <id>Q5PRF9</id>
        <label>SAMD4B</label>
    </interactant>
    <organismsDiffer>false</organismsDiffer>
    <experiments>3</experiments>
</comment>
<comment type="interaction">
    <interactant intactId="EBI-2126349">
        <id>Q9HD36</id>
    </interactant>
    <interactant intactId="EBI-11732844">
        <id>Q86VY9</id>
        <label>TMEM200A</label>
    </interactant>
    <organismsDiffer>false</organismsDiffer>
    <experiments>3</experiments>
</comment>
<comment type="subcellular location">
    <subcellularLocation>
        <location evidence="4 8 9 10 12">Mitochondrion</location>
    </subcellularLocation>
    <subcellularLocation>
        <location evidence="4">Nucleus membrane</location>
    </subcellularLocation>
    <subcellularLocation>
        <location evidence="10 13">Endoplasmic reticulum</location>
    </subcellularLocation>
    <subcellularLocation>
        <location evidence="1">Cytoplasm</location>
        <location evidence="1">Cytoskeleton</location>
        <location evidence="1">Spindle</location>
    </subcellularLocation>
    <text evidence="13">Localizes to mitochondria-associated endoplasmic reticulum membranes (MAMs) (PubMed:27995898). Localization to MAMs is greatly reduced under apoptotic stress conditions (PubMed:27995898).</text>
</comment>
<comment type="tissue specificity">
    <text evidence="4">Widely expressed in adult tissues. Preferentially expressed in lung, liver and kidney.</text>
</comment>
<comment type="PTM">
    <text evidence="9">Monoubiquitinated by UBQLN1; results in stabilization of BCL2L10 protein abundance and in relocalization from mitochondria to cytoplasm.</text>
</comment>
<comment type="similarity">
    <text evidence="21">Belongs to the Bcl-2 family.</text>
</comment>
<comment type="caution">
    <text evidence="22">It is uncertain whether Met-1 or Met-11 is the initiator.</text>
</comment>
<dbReference type="EMBL" id="AF285092">
    <property type="protein sequence ID" value="AAG00503.1"/>
    <property type="molecule type" value="mRNA"/>
</dbReference>
<dbReference type="EMBL" id="AF326964">
    <property type="protein sequence ID" value="AAK48715.1"/>
    <property type="molecule type" value="mRNA"/>
</dbReference>
<dbReference type="EMBL" id="AC023906">
    <property type="status" value="NOT_ANNOTATED_CDS"/>
    <property type="molecule type" value="Genomic_DNA"/>
</dbReference>
<dbReference type="EMBL" id="BC093826">
    <property type="protein sequence ID" value="AAH93826.1"/>
    <property type="molecule type" value="mRNA"/>
</dbReference>
<dbReference type="EMBL" id="BC093828">
    <property type="protein sequence ID" value="AAH93828.1"/>
    <property type="molecule type" value="mRNA"/>
</dbReference>
<dbReference type="EMBL" id="BC104442">
    <property type="protein sequence ID" value="AAI04443.1"/>
    <property type="molecule type" value="mRNA"/>
</dbReference>
<dbReference type="EMBL" id="BC104443">
    <property type="protein sequence ID" value="AAI04444.1"/>
    <property type="molecule type" value="mRNA"/>
</dbReference>
<dbReference type="EMBL" id="AJ458330">
    <property type="protein sequence ID" value="CAD30221.1"/>
    <property type="molecule type" value="Genomic_DNA"/>
</dbReference>
<dbReference type="CCDS" id="CCDS10148.1"/>
<dbReference type="RefSeq" id="NP_001293097.1">
    <property type="nucleotide sequence ID" value="NM_001306168.1"/>
</dbReference>
<dbReference type="RefSeq" id="NP_065129.1">
    <property type="nucleotide sequence ID" value="NM_020396.4"/>
</dbReference>
<dbReference type="PDB" id="4B4S">
    <property type="method" value="X-ray"/>
    <property type="resolution" value="1.90 A"/>
    <property type="chains" value="A=12-177"/>
</dbReference>
<dbReference type="PDBsum" id="4B4S"/>
<dbReference type="SMR" id="Q9HD36"/>
<dbReference type="BioGRID" id="115334">
    <property type="interactions" value="20"/>
</dbReference>
<dbReference type="FunCoup" id="Q9HD36">
    <property type="interactions" value="29"/>
</dbReference>
<dbReference type="IntAct" id="Q9HD36">
    <property type="interactions" value="14"/>
</dbReference>
<dbReference type="MINT" id="Q9HD36"/>
<dbReference type="STRING" id="9606.ENSP00000453562"/>
<dbReference type="BindingDB" id="Q9HD36"/>
<dbReference type="ChEMBL" id="CHEMBL5988"/>
<dbReference type="GlyGen" id="Q9HD36">
    <property type="glycosylation" value="1 site"/>
</dbReference>
<dbReference type="iPTMnet" id="Q9HD36"/>
<dbReference type="PhosphoSitePlus" id="Q9HD36"/>
<dbReference type="BioMuta" id="BCL2L10"/>
<dbReference type="DMDM" id="23396469"/>
<dbReference type="MassIVE" id="Q9HD36"/>
<dbReference type="PaxDb" id="9606-ENSP00000260442"/>
<dbReference type="PeptideAtlas" id="Q9HD36"/>
<dbReference type="Antibodypedia" id="24926">
    <property type="antibodies" value="236 antibodies from 36 providers"/>
</dbReference>
<dbReference type="DNASU" id="10017"/>
<dbReference type="Ensembl" id="ENST00000260442.3">
    <property type="protein sequence ID" value="ENSP00000260442.3"/>
    <property type="gene ID" value="ENSG00000137875.4"/>
</dbReference>
<dbReference type="GeneID" id="10017"/>
<dbReference type="KEGG" id="hsa:10017"/>
<dbReference type="MANE-Select" id="ENST00000260442.3">
    <property type="protein sequence ID" value="ENSP00000260442.3"/>
    <property type="RefSeq nucleotide sequence ID" value="NM_020396.4"/>
    <property type="RefSeq protein sequence ID" value="NP_065129.1"/>
</dbReference>
<dbReference type="UCSC" id="uc002abq.4">
    <property type="organism name" value="human"/>
</dbReference>
<dbReference type="AGR" id="HGNC:993"/>
<dbReference type="CTD" id="10017"/>
<dbReference type="DisGeNET" id="10017"/>
<dbReference type="GeneCards" id="BCL2L10"/>
<dbReference type="HGNC" id="HGNC:993">
    <property type="gene designation" value="BCL2L10"/>
</dbReference>
<dbReference type="HPA" id="ENSG00000137875">
    <property type="expression patterns" value="Tissue enhanced (liver, skin)"/>
</dbReference>
<dbReference type="MIM" id="606910">
    <property type="type" value="gene"/>
</dbReference>
<dbReference type="neXtProt" id="NX_Q9HD36"/>
<dbReference type="OpenTargets" id="ENSG00000137875"/>
<dbReference type="PharmGKB" id="PA25304"/>
<dbReference type="VEuPathDB" id="HostDB:ENSG00000137875"/>
<dbReference type="eggNOG" id="KOG4728">
    <property type="taxonomic scope" value="Eukaryota"/>
</dbReference>
<dbReference type="GeneTree" id="ENSGT01130000278292"/>
<dbReference type="HOGENOM" id="CLU_122207_0_0_1"/>
<dbReference type="InParanoid" id="Q9HD36"/>
<dbReference type="OMA" id="TDYLEYC"/>
<dbReference type="OrthoDB" id="8856583at2759"/>
<dbReference type="PAN-GO" id="Q9HD36">
    <property type="GO annotations" value="6 GO annotations based on evolutionary models"/>
</dbReference>
<dbReference type="PhylomeDB" id="Q9HD36"/>
<dbReference type="TreeFam" id="TF334762"/>
<dbReference type="PathwayCommons" id="Q9HD36"/>
<dbReference type="SignaLink" id="Q9HD36"/>
<dbReference type="BioGRID-ORCS" id="10017">
    <property type="hits" value="13 hits in 1149 CRISPR screens"/>
</dbReference>
<dbReference type="EvolutionaryTrace" id="Q9HD36"/>
<dbReference type="GeneWiki" id="BCL2L10"/>
<dbReference type="GenomeRNAi" id="10017"/>
<dbReference type="Pharos" id="Q9HD36">
    <property type="development level" value="Tchem"/>
</dbReference>
<dbReference type="PRO" id="PR:Q9HD36"/>
<dbReference type="Proteomes" id="UP000005640">
    <property type="component" value="Chromosome 15"/>
</dbReference>
<dbReference type="RNAct" id="Q9HD36">
    <property type="molecule type" value="protein"/>
</dbReference>
<dbReference type="Bgee" id="ENSG00000137875">
    <property type="expression patterns" value="Expressed in right lobe of liver and 80 other cell types or tissues"/>
</dbReference>
<dbReference type="ExpressionAtlas" id="Q9HD36">
    <property type="expression patterns" value="baseline and differential"/>
</dbReference>
<dbReference type="GO" id="GO:0005829">
    <property type="term" value="C:cytosol"/>
    <property type="evidence" value="ECO:0000314"/>
    <property type="project" value="HGNC-UCL"/>
</dbReference>
<dbReference type="GO" id="GO:0005783">
    <property type="term" value="C:endoplasmic reticulum"/>
    <property type="evidence" value="ECO:0000314"/>
    <property type="project" value="UniProtKB"/>
</dbReference>
<dbReference type="GO" id="GO:0016020">
    <property type="term" value="C:membrane"/>
    <property type="evidence" value="ECO:0000304"/>
    <property type="project" value="ProtInc"/>
</dbReference>
<dbReference type="GO" id="GO:0044233">
    <property type="term" value="C:mitochondria-associated endoplasmic reticulum membrane contact site"/>
    <property type="evidence" value="ECO:0000314"/>
    <property type="project" value="UniProtKB"/>
</dbReference>
<dbReference type="GO" id="GO:0005741">
    <property type="term" value="C:mitochondrial outer membrane"/>
    <property type="evidence" value="ECO:0000318"/>
    <property type="project" value="GO_Central"/>
</dbReference>
<dbReference type="GO" id="GO:0005739">
    <property type="term" value="C:mitochondrion"/>
    <property type="evidence" value="ECO:0000314"/>
    <property type="project" value="UniProtKB"/>
</dbReference>
<dbReference type="GO" id="GO:0031965">
    <property type="term" value="C:nuclear membrane"/>
    <property type="evidence" value="ECO:0007669"/>
    <property type="project" value="UniProtKB-SubCell"/>
</dbReference>
<dbReference type="GO" id="GO:0005819">
    <property type="term" value="C:spindle"/>
    <property type="evidence" value="ECO:0000250"/>
    <property type="project" value="UniProtKB"/>
</dbReference>
<dbReference type="GO" id="GO:0005509">
    <property type="term" value="F:calcium ion binding"/>
    <property type="evidence" value="ECO:0000315"/>
    <property type="project" value="UniProtKB"/>
</dbReference>
<dbReference type="GO" id="GO:0089720">
    <property type="term" value="F:caspase binding"/>
    <property type="evidence" value="ECO:0000353"/>
    <property type="project" value="ParkinsonsUK-UCL"/>
</dbReference>
<dbReference type="GO" id="GO:0015267">
    <property type="term" value="F:channel activity"/>
    <property type="evidence" value="ECO:0000318"/>
    <property type="project" value="GO_Central"/>
</dbReference>
<dbReference type="GO" id="GO:0006915">
    <property type="term" value="P:apoptotic process"/>
    <property type="evidence" value="ECO:0000315"/>
    <property type="project" value="UniProtKB"/>
</dbReference>
<dbReference type="GO" id="GO:0097192">
    <property type="term" value="P:extrinsic apoptotic signaling pathway in absence of ligand"/>
    <property type="evidence" value="ECO:0000318"/>
    <property type="project" value="GO_Central"/>
</dbReference>
<dbReference type="GO" id="GO:0007292">
    <property type="term" value="P:female gamete generation"/>
    <property type="evidence" value="ECO:0000304"/>
    <property type="project" value="ProtInc"/>
</dbReference>
<dbReference type="GO" id="GO:0008630">
    <property type="term" value="P:intrinsic apoptotic signaling pathway in response to DNA damage"/>
    <property type="evidence" value="ECO:0000318"/>
    <property type="project" value="GO_Central"/>
</dbReference>
<dbReference type="GO" id="GO:0031023">
    <property type="term" value="P:microtubule organizing center organization"/>
    <property type="evidence" value="ECO:0000250"/>
    <property type="project" value="UniProtKB"/>
</dbReference>
<dbReference type="GO" id="GO:0043066">
    <property type="term" value="P:negative regulation of apoptotic process"/>
    <property type="evidence" value="ECO:0000314"/>
    <property type="project" value="HGNC-UCL"/>
</dbReference>
<dbReference type="GO" id="GO:0043065">
    <property type="term" value="P:positive regulation of apoptotic process"/>
    <property type="evidence" value="ECO:0000318"/>
    <property type="project" value="GO_Central"/>
</dbReference>
<dbReference type="GO" id="GO:0001836">
    <property type="term" value="P:release of cytochrome c from mitochondria"/>
    <property type="evidence" value="ECO:0000318"/>
    <property type="project" value="GO_Central"/>
</dbReference>
<dbReference type="GO" id="GO:0007283">
    <property type="term" value="P:spermatogenesis"/>
    <property type="evidence" value="ECO:0000304"/>
    <property type="project" value="ProtInc"/>
</dbReference>
<dbReference type="CDD" id="cd06845">
    <property type="entry name" value="Bcl-2_like"/>
    <property type="match status" value="1"/>
</dbReference>
<dbReference type="DisProt" id="DP02676"/>
<dbReference type="FunFam" id="1.10.437.10:FF:000014">
    <property type="entry name" value="Bcl-2-like protein 10"/>
    <property type="match status" value="1"/>
</dbReference>
<dbReference type="Gene3D" id="1.10.437.10">
    <property type="entry name" value="Blc2-like"/>
    <property type="match status" value="1"/>
</dbReference>
<dbReference type="InterPro" id="IPR036834">
    <property type="entry name" value="Bcl-2-like_sf"/>
</dbReference>
<dbReference type="InterPro" id="IPR046371">
    <property type="entry name" value="Bcl-2_BH1-3"/>
</dbReference>
<dbReference type="InterPro" id="IPR026298">
    <property type="entry name" value="Bcl-2_fam"/>
</dbReference>
<dbReference type="InterPro" id="IPR002475">
    <property type="entry name" value="Bcl2-like"/>
</dbReference>
<dbReference type="InterPro" id="IPR020717">
    <property type="entry name" value="Bcl2_BH1_motif_CS"/>
</dbReference>
<dbReference type="InterPro" id="IPR020726">
    <property type="entry name" value="Bcl2_BH2_motif_CS"/>
</dbReference>
<dbReference type="PANTHER" id="PTHR11256">
    <property type="entry name" value="BCL-2 RELATED"/>
    <property type="match status" value="1"/>
</dbReference>
<dbReference type="PANTHER" id="PTHR11256:SF47">
    <property type="entry name" value="BCL-2-LIKE PROTEIN 10"/>
    <property type="match status" value="1"/>
</dbReference>
<dbReference type="Pfam" id="PF00452">
    <property type="entry name" value="Bcl-2"/>
    <property type="match status" value="1"/>
</dbReference>
<dbReference type="SMART" id="SM00337">
    <property type="entry name" value="BCL"/>
    <property type="match status" value="1"/>
</dbReference>
<dbReference type="SUPFAM" id="SSF56854">
    <property type="entry name" value="Bcl-2 inhibitors of programmed cell death"/>
    <property type="match status" value="1"/>
</dbReference>
<dbReference type="PROSITE" id="PS50062">
    <property type="entry name" value="BCL2_FAMILY"/>
    <property type="match status" value="1"/>
</dbReference>
<dbReference type="PROSITE" id="PS01080">
    <property type="entry name" value="BH1"/>
    <property type="match status" value="1"/>
</dbReference>
<dbReference type="PROSITE" id="PS01258">
    <property type="entry name" value="BH2"/>
    <property type="match status" value="1"/>
</dbReference>
<accession>Q9HD36</accession>
<accession>Q3SX80</accession>
<accession>Q52LQ9</accession>
<accession>Q8TCS9</accession>
<keyword id="KW-0002">3D-structure</keyword>
<keyword id="KW-0053">Apoptosis</keyword>
<keyword id="KW-0963">Cytoplasm</keyword>
<keyword id="KW-0206">Cytoskeleton</keyword>
<keyword id="KW-0256">Endoplasmic reticulum</keyword>
<keyword id="KW-1017">Isopeptide bond</keyword>
<keyword id="KW-0472">Membrane</keyword>
<keyword id="KW-0496">Mitochondrion</keyword>
<keyword id="KW-0539">Nucleus</keyword>
<keyword id="KW-1267">Proteomics identification</keyword>
<keyword id="KW-1185">Reference proteome</keyword>
<keyword id="KW-0812">Transmembrane</keyword>
<keyword id="KW-1133">Transmembrane helix</keyword>
<keyword id="KW-0832">Ubl conjugation</keyword>
<sequence>MVDQLRERTTMADPLRERTELLLADYLGYCAREPGTPEPAPSTPEAAVLRSAAARLRQIHRSFFSAYLGYPGNRFELVALMADSVLSDSPGPTWGRVVTLVTFAGTLLERGPLVTARWKKWGFQPRLKEQEGDVARDCQRLVALLSSRLMGQHRAWLQAQGGWDGFCHFFRTPFPLAFWRKQLVQAFLSCLLTTAFIYLWTRLL</sequence>
<organism>
    <name type="scientific">Homo sapiens</name>
    <name type="common">Human</name>
    <dbReference type="NCBI Taxonomy" id="9606"/>
    <lineage>
        <taxon>Eukaryota</taxon>
        <taxon>Metazoa</taxon>
        <taxon>Chordata</taxon>
        <taxon>Craniata</taxon>
        <taxon>Vertebrata</taxon>
        <taxon>Euteleostomi</taxon>
        <taxon>Mammalia</taxon>
        <taxon>Eutheria</taxon>
        <taxon>Euarchontoglires</taxon>
        <taxon>Primates</taxon>
        <taxon>Haplorrhini</taxon>
        <taxon>Catarrhini</taxon>
        <taxon>Hominidae</taxon>
        <taxon>Homo</taxon>
    </lineage>
</organism>
<gene>
    <name evidence="18" type="primary">BCL2L10</name>
    <name evidence="20" type="synonym">BCL-B</name>
    <name evidence="19" type="synonym">BCLB</name>
    <name evidence="23" type="synonym">BOO</name>
    <name evidence="23" type="synonym">DIVA</name>
</gene>
<proteinExistence type="evidence at protein level"/>
<reference key="1">
    <citation type="journal article" date="2001" name="Hum. Mol. Genet.">
        <title>Bcl2-L-10, a novel anti-apoptotic member of the Bcl-2 family, blocks apoptosis in the mitochondria death pathway but not in the death receptor pathway.</title>
        <authorList>
            <person name="Zhang H."/>
            <person name="Holzgreve W."/>
            <person name="De Geyter C."/>
        </authorList>
    </citation>
    <scope>NUCLEOTIDE SEQUENCE [MRNA]</scope>
    <scope>FUNCTION</scope>
    <source>
        <tissue>Ovary</tissue>
    </source>
</reference>
<reference key="2">
    <citation type="journal article" date="2001" name="J. Biol. Chem.">
        <title>Bcl-B, a novel Bcl-2 family member that differentially binds and regulates Bax and Bak.</title>
        <authorList>
            <person name="Ke N."/>
            <person name="Godzik A."/>
            <person name="Reed J.C."/>
        </authorList>
    </citation>
    <scope>NUCLEOTIDE SEQUENCE [MRNA]</scope>
    <scope>FUNCTION</scope>
    <scope>INTERACTION WITH BAX; BCL2 AND BCL2L1</scope>
    <source>
        <tissue>Liver</tissue>
    </source>
</reference>
<reference key="3">
    <citation type="journal article" date="2006" name="Nature">
        <title>Analysis of the DNA sequence and duplication history of human chromosome 15.</title>
        <authorList>
            <person name="Zody M.C."/>
            <person name="Garber M."/>
            <person name="Sharpe T."/>
            <person name="Young S.K."/>
            <person name="Rowen L."/>
            <person name="O'Neill K."/>
            <person name="Whittaker C.A."/>
            <person name="Kamal M."/>
            <person name="Chang J.L."/>
            <person name="Cuomo C.A."/>
            <person name="Dewar K."/>
            <person name="FitzGerald M.G."/>
            <person name="Kodira C.D."/>
            <person name="Madan A."/>
            <person name="Qin S."/>
            <person name="Yang X."/>
            <person name="Abbasi N."/>
            <person name="Abouelleil A."/>
            <person name="Arachchi H.M."/>
            <person name="Baradarani L."/>
            <person name="Birditt B."/>
            <person name="Bloom S."/>
            <person name="Bloom T."/>
            <person name="Borowsky M.L."/>
            <person name="Burke J."/>
            <person name="Butler J."/>
            <person name="Cook A."/>
            <person name="DeArellano K."/>
            <person name="DeCaprio D."/>
            <person name="Dorris L. III"/>
            <person name="Dors M."/>
            <person name="Eichler E.E."/>
            <person name="Engels R."/>
            <person name="Fahey J."/>
            <person name="Fleetwood P."/>
            <person name="Friedman C."/>
            <person name="Gearin G."/>
            <person name="Hall J.L."/>
            <person name="Hensley G."/>
            <person name="Johnson E."/>
            <person name="Jones C."/>
            <person name="Kamat A."/>
            <person name="Kaur A."/>
            <person name="Locke D.P."/>
            <person name="Madan A."/>
            <person name="Munson G."/>
            <person name="Jaffe D.B."/>
            <person name="Lui A."/>
            <person name="Macdonald P."/>
            <person name="Mauceli E."/>
            <person name="Naylor J.W."/>
            <person name="Nesbitt R."/>
            <person name="Nicol R."/>
            <person name="O'Leary S.B."/>
            <person name="Ratcliffe A."/>
            <person name="Rounsley S."/>
            <person name="She X."/>
            <person name="Sneddon K.M.B."/>
            <person name="Stewart S."/>
            <person name="Sougnez C."/>
            <person name="Stone S.M."/>
            <person name="Topham K."/>
            <person name="Vincent D."/>
            <person name="Wang S."/>
            <person name="Zimmer A.R."/>
            <person name="Birren B.W."/>
            <person name="Hood L."/>
            <person name="Lander E.S."/>
            <person name="Nusbaum C."/>
        </authorList>
    </citation>
    <scope>NUCLEOTIDE SEQUENCE [LARGE SCALE GENOMIC DNA]</scope>
</reference>
<reference key="4">
    <citation type="journal article" date="2004" name="Genome Res.">
        <title>The status, quality, and expansion of the NIH full-length cDNA project: the Mammalian Gene Collection (MGC).</title>
        <authorList>
            <consortium name="The MGC Project Team"/>
        </authorList>
    </citation>
    <scope>NUCLEOTIDE SEQUENCE [LARGE SCALE MRNA]</scope>
    <source>
        <tissue>Brain</tissue>
    </source>
</reference>
<reference key="5">
    <citation type="journal article" date="2001" name="Oncogene">
        <title>NrH, a human homologue of Nr-13 associates with Bcl-Xs and is an inhibitor of apoptosis.</title>
        <authorList>
            <person name="Aouacheria A."/>
            <person name="Arnaud E."/>
            <person name="Venet S."/>
            <person name="Lalle P."/>
            <person name="Gouy M."/>
            <person name="Rigal D."/>
            <person name="Gillet G."/>
        </authorList>
    </citation>
    <scope>NUCLEOTIDE SEQUENCE [GENOMIC DNA] OF 11-204</scope>
    <scope>SUBCELLULAR LOCATION</scope>
    <scope>TISSUE SPECIFICITY</scope>
    <scope>INTERACTION WITH BCL2L1</scope>
</reference>
<reference key="6">
    <citation type="journal article" date="2007" name="Biochem. Biophys. Res. Commun.">
        <title>NM23-H2 involves in negative regulation of Diva and Bcl2L10 in apoptosis signaling.</title>
        <authorList>
            <person name="Kang Y."/>
            <person name="Lee D.C."/>
            <person name="Han J."/>
            <person name="Yoon S."/>
            <person name="Won M."/>
            <person name="Yeom J.H."/>
            <person name="Seong M.J."/>
            <person name="Ko J.J."/>
            <person name="Lee K.A."/>
            <person name="Lee K."/>
            <person name="Bae J."/>
        </authorList>
    </citation>
    <scope>INTERACTION WITH NME2</scope>
    <scope>MUTAGENESIS OF 178-PHE--LEU-191</scope>
</reference>
<reference key="7">
    <citation type="journal article" date="2009" name="Cell. Physiol. Biochem.">
        <title>HIP1R interacts with a member of Bcl-2 family, BCL2L10, and induces BAK-dependent cell death.</title>
        <authorList>
            <person name="Kim J.H."/>
            <person name="Yoon S."/>
            <person name="Won M."/>
            <person name="Sim S.H."/>
            <person name="Ko J.J."/>
            <person name="Han S."/>
            <person name="Lee K.A."/>
            <person name="Lee K."/>
            <person name="Bae J."/>
        </authorList>
    </citation>
    <scope>INTERACTION WITH HIP1R AND CASP9</scope>
</reference>
<reference key="8">
    <citation type="journal article" date="2011" name="Mol. Biol. Evol.">
        <title>Characterization of unique signature sequences in the divergent maternal protein Bcl2l10.</title>
        <authorList>
            <person name="Guillemin Y."/>
            <person name="Cornut-Thibaut A."/>
            <person name="Gillet G."/>
            <person name="Penin F."/>
            <person name="Aouacheria A."/>
        </authorList>
    </citation>
    <scope>COFACTOR</scope>
    <scope>SUBCELLULAR LOCATION</scope>
    <scope>MUTAGENESIS OF 118-TRP--ASP-133; GLU-131 AND ASP-133</scope>
</reference>
<reference key="9">
    <citation type="journal article" date="2012" name="Autophagy">
        <title>The anti-apoptotic Bcl-B protein inhibits BECN1-dependent autophagic cell death.</title>
        <authorList>
            <person name="Robert G."/>
            <person name="Gastaldi C."/>
            <person name="Puissant A."/>
            <person name="Hamouda A."/>
            <person name="Jacquel A."/>
            <person name="Dufies M."/>
            <person name="Belhacene N."/>
            <person name="Colosetti P."/>
            <person name="Reed J.C."/>
            <person name="Auberger P."/>
            <person name="Luciano F."/>
        </authorList>
    </citation>
    <scope>INTERACTION WITH BECN1 AND BCL2L11</scope>
    <scope>SUBCELLULAR LOCATION</scope>
    <scope>MUTAGENESIS OF GLY-95</scope>
</reference>
<reference key="10">
    <citation type="journal article" date="2012" name="Proc. Natl. Acad. Sci. U.S.A.">
        <title>Ubiquitination, localization, and stability of an anti-apoptotic BCL2-like protein, BCL2L10/BCLb, are regulated by Ubiquilin1.</title>
        <authorList>
            <person name="Beverly L.J."/>
            <person name="Lockwood W.W."/>
            <person name="Shah P.P."/>
            <person name="Erdjument-Bromage H."/>
            <person name="Varmus H."/>
        </authorList>
    </citation>
    <scope>INTERACTION WITH UBQLN1</scope>
    <scope>SUBCELLULAR LOCATION</scope>
    <scope>UBIQUITINATED</scope>
</reference>
<reference key="11">
    <citation type="journal article" date="2013" name="Oncogene">
        <title>Polyubiquitination and proteasomal turnover controls the anti-apoptotic activity of Bcl-B.</title>
        <authorList>
            <person name="van de Kooij B."/>
            <person name="Rooswinkel R.W."/>
            <person name="Kok F."/>
            <person name="Herrebout M."/>
            <person name="de Vries E."/>
            <person name="Paauwe M."/>
            <person name="Janssen G.M."/>
            <person name="van Veelen P.A."/>
            <person name="Borst J."/>
        </authorList>
    </citation>
    <scope>INTERACTION WITH BCL2L11; BIK AND PMAIP1</scope>
    <scope>SUBCELLULAR LOCATION</scope>
    <scope>UBIQUITINATED AT LYS-119; LYS-120 AND LYS-128</scope>
    <scope>MUTAGENESIS OF LYS-119; LYS-120 AND LYS-128</scope>
</reference>
<reference key="12">
    <citation type="journal article" date="2016" name="Elife">
        <title>IRBIT controls apoptosis by interacting with the Bcl-2 homolog, Bcl2l10, and by promoting ER-mitochondria contact.</title>
        <authorList>
            <person name="Bonneau B."/>
            <person name="Ando H."/>
            <person name="Kawaai K."/>
            <person name="Hirose M."/>
            <person name="Takahashi-Iwanaga H."/>
            <person name="Mikoshiba K."/>
        </authorList>
    </citation>
    <scope>FUNCTION</scope>
    <scope>INTERACTION WITH AHCYL1; ITPR1; ITPR2 AND ITPR3</scope>
    <scope>SUBCELLULAR LOCATION</scope>
</reference>
<reference key="13">
    <citation type="journal article" date="2021" name="Mol. Oncol.">
        <title>UBQLN4 is an ATM substrate that stabilizes the anti-apoptotic proteins BCL2A1 and BCL2L10 in mesothelioma.</title>
        <authorList>
            <person name="Liu F."/>
            <person name="Pan R."/>
            <person name="Ding H."/>
            <person name="Gu L."/>
            <person name="Yang Y."/>
            <person name="Li C."/>
            <person name="Xu Y."/>
            <person name="Hu R."/>
            <person name="Chen H."/>
            <person name="Zhang X."/>
            <person name="Nie Y."/>
        </authorList>
    </citation>
    <scope>INTERACTION WITH UBQLN4</scope>
</reference>
<reference evidence="24" key="14">
    <citation type="journal article" date="2012" name="Cell Death Dis.">
        <title>The restricted binding repertoire of Bcl-B leaves Bim as the universal BH3-only prosurvival Bcl-2 protein antagonist.</title>
        <authorList>
            <person name="Rautureau G.J."/>
            <person name="Yabal M."/>
            <person name="Yang H."/>
            <person name="Huang D.C."/>
            <person name="Kvansakul M."/>
            <person name="Hinds M.G."/>
        </authorList>
    </citation>
    <scope>X-RAY CRYSTALLOGRAPHY (1.9 ANGSTROMS) OF 12-177 IN COMPLEX WITH BCL2L11</scope>
    <scope>INTERACTION WITH BCL2L11; BIK AND BAX</scope>
</reference>
<name>B2L10_HUMAN</name>